<sequence>MARKRIAFIFTQGPHGSSAGREGLDALLATSALSEDIGVFFISDGVLQLLPQQQPEKILARNYIATFGVLPLYDVENCYLCERSLQQRGLSKMADWILDVTVLSPADLRRELGTYDVVLTF</sequence>
<comment type="function">
    <text evidence="1">Part of a sulfur-relay system required for 2-thiolation of 5-methylaminomethyl-2-thiouridine (mnm(5)s(2)U) at tRNA wobble positions.</text>
</comment>
<comment type="subunit">
    <text evidence="1">Heterohexamer, formed by a dimer of trimers. The hexameric TusBCD complex contains 2 copies each of TusB, TusC and TusD. The TusBCD complex interacts with TusE.</text>
</comment>
<comment type="subcellular location">
    <subcellularLocation>
        <location evidence="1">Cytoplasm</location>
    </subcellularLocation>
</comment>
<comment type="similarity">
    <text evidence="1">Belongs to the DsrF/TusC family.</text>
</comment>
<evidence type="ECO:0000255" key="1">
    <source>
        <dbReference type="HAMAP-Rule" id="MF_00389"/>
    </source>
</evidence>
<keyword id="KW-0963">Cytoplasm</keyword>
<keyword id="KW-0819">tRNA processing</keyword>
<protein>
    <recommendedName>
        <fullName evidence="1">Protein TusC</fullName>
    </recommendedName>
    <alternativeName>
        <fullName evidence="1">tRNA 2-thiouridine synthesizing protein C</fullName>
    </alternativeName>
</protein>
<organism>
    <name type="scientific">Yersinia pestis bv. Antiqua (strain Antiqua)</name>
    <dbReference type="NCBI Taxonomy" id="360102"/>
    <lineage>
        <taxon>Bacteria</taxon>
        <taxon>Pseudomonadati</taxon>
        <taxon>Pseudomonadota</taxon>
        <taxon>Gammaproteobacteria</taxon>
        <taxon>Enterobacterales</taxon>
        <taxon>Yersiniaceae</taxon>
        <taxon>Yersinia</taxon>
    </lineage>
</organism>
<accession>Q1C2T6</accession>
<dbReference type="EMBL" id="CP000308">
    <property type="protein sequence ID" value="ABG15236.1"/>
    <property type="molecule type" value="Genomic_DNA"/>
</dbReference>
<dbReference type="RefSeq" id="WP_002212321.1">
    <property type="nucleotide sequence ID" value="NZ_CP009906.1"/>
</dbReference>
<dbReference type="SMR" id="Q1C2T6"/>
<dbReference type="GeneID" id="57974405"/>
<dbReference type="KEGG" id="ypa:YPA_3274"/>
<dbReference type="Proteomes" id="UP000001971">
    <property type="component" value="Chromosome"/>
</dbReference>
<dbReference type="GO" id="GO:0005737">
    <property type="term" value="C:cytoplasm"/>
    <property type="evidence" value="ECO:0007669"/>
    <property type="project" value="UniProtKB-SubCell"/>
</dbReference>
<dbReference type="GO" id="GO:0008033">
    <property type="term" value="P:tRNA processing"/>
    <property type="evidence" value="ECO:0007669"/>
    <property type="project" value="UniProtKB-UniRule"/>
</dbReference>
<dbReference type="Gene3D" id="3.40.1260.10">
    <property type="entry name" value="DsrEFH-like"/>
    <property type="match status" value="1"/>
</dbReference>
<dbReference type="HAMAP" id="MF_00389">
    <property type="entry name" value="Thiourid_synth_C"/>
    <property type="match status" value="1"/>
</dbReference>
<dbReference type="InterPro" id="IPR027396">
    <property type="entry name" value="DsrEFH-like"/>
</dbReference>
<dbReference type="InterPro" id="IPR003787">
    <property type="entry name" value="Sulphur_relay_DsrE/F-like"/>
</dbReference>
<dbReference type="InterPro" id="IPR037450">
    <property type="entry name" value="Sulphur_relay_TusC"/>
</dbReference>
<dbReference type="InterPro" id="IPR017462">
    <property type="entry name" value="Sulphur_relay_TusC/DsrF"/>
</dbReference>
<dbReference type="NCBIfam" id="NF001238">
    <property type="entry name" value="PRK00211.1"/>
    <property type="match status" value="1"/>
</dbReference>
<dbReference type="NCBIfam" id="TIGR03010">
    <property type="entry name" value="sulf_tusC_dsrF"/>
    <property type="match status" value="1"/>
</dbReference>
<dbReference type="PANTHER" id="PTHR38780">
    <property type="entry name" value="PROTEIN TUSC"/>
    <property type="match status" value="1"/>
</dbReference>
<dbReference type="PANTHER" id="PTHR38780:SF1">
    <property type="entry name" value="PROTEIN TUSC"/>
    <property type="match status" value="1"/>
</dbReference>
<dbReference type="Pfam" id="PF02635">
    <property type="entry name" value="DsrE"/>
    <property type="match status" value="1"/>
</dbReference>
<dbReference type="SUPFAM" id="SSF75169">
    <property type="entry name" value="DsrEFH-like"/>
    <property type="match status" value="1"/>
</dbReference>
<feature type="chain" id="PRO_1000013247" description="Protein TusC">
    <location>
        <begin position="1"/>
        <end position="121"/>
    </location>
</feature>
<reference key="1">
    <citation type="journal article" date="2006" name="J. Bacteriol.">
        <title>Complete genome sequence of Yersinia pestis strains Antiqua and Nepal516: evidence of gene reduction in an emerging pathogen.</title>
        <authorList>
            <person name="Chain P.S.G."/>
            <person name="Hu P."/>
            <person name="Malfatti S.A."/>
            <person name="Radnedge L."/>
            <person name="Larimer F."/>
            <person name="Vergez L.M."/>
            <person name="Worsham P."/>
            <person name="Chu M.C."/>
            <person name="Andersen G.L."/>
        </authorList>
    </citation>
    <scope>NUCLEOTIDE SEQUENCE [LARGE SCALE GENOMIC DNA]</scope>
    <source>
        <strain>Antiqua</strain>
    </source>
</reference>
<gene>
    <name evidence="1" type="primary">tusC</name>
    <name type="ordered locus">YPA_3274</name>
</gene>
<proteinExistence type="inferred from homology"/>
<name>TUSC_YERPA</name>